<proteinExistence type="inferred from homology"/>
<comment type="function">
    <text evidence="1">ATP-dependent carboxylate-amine ligase which exhibits weak glutamate--cysteine ligase activity.</text>
</comment>
<comment type="catalytic activity">
    <reaction evidence="1">
        <text>L-cysteine + L-glutamate + ATP = gamma-L-glutamyl-L-cysteine + ADP + phosphate + H(+)</text>
        <dbReference type="Rhea" id="RHEA:13285"/>
        <dbReference type="ChEBI" id="CHEBI:15378"/>
        <dbReference type="ChEBI" id="CHEBI:29985"/>
        <dbReference type="ChEBI" id="CHEBI:30616"/>
        <dbReference type="ChEBI" id="CHEBI:35235"/>
        <dbReference type="ChEBI" id="CHEBI:43474"/>
        <dbReference type="ChEBI" id="CHEBI:58173"/>
        <dbReference type="ChEBI" id="CHEBI:456216"/>
        <dbReference type="EC" id="6.3.2.2"/>
    </reaction>
</comment>
<comment type="similarity">
    <text evidence="1">Belongs to the glutamate--cysteine ligase type 2 family. YbdK subfamily.</text>
</comment>
<feature type="chain" id="PRO_0000291517" description="Putative glutamate--cysteine ligase 2">
    <location>
        <begin position="1"/>
        <end position="385"/>
    </location>
</feature>
<keyword id="KW-0067">ATP-binding</keyword>
<keyword id="KW-0436">Ligase</keyword>
<keyword id="KW-0547">Nucleotide-binding</keyword>
<sequence>MSLMSSVRPSLSIGIEEEYQTVDPVTRDLRSHIHAEIVQKGKLLLAERVKPEMHQSVVEIGTGVCQNIQEAKDEIRDIRQQIIRLARQNDLRLAAGGTHPFAQWREQEIYPDDRYRTIVEDLKMVARANLIFGLHVHIGVEDRETAIQLMNSARYFLPHLLALSANSPFWVGMETGLRSYRCKVFDKFPRTNIPDLYQSWSEFENYVNLLIHTNCIDNAKKIWWDIRPHPYFPTLEFRICDMPMRLEETIAIAALCQAIIAKLYRIHEQNLTFRHYSRSLIMENKWRAARYGLDGKMIDFGKQTEVPARQLIEEILEFVSDVVPELGSREEIAYIRRIMEHGNGADRQLRVFHETGDLKKVVDYMIEETEYGLFAPAFTAAGEGQ</sequence>
<gene>
    <name type="ordered locus">Acid_3926</name>
</gene>
<organism>
    <name type="scientific">Solibacter usitatus (strain Ellin6076)</name>
    <dbReference type="NCBI Taxonomy" id="234267"/>
    <lineage>
        <taxon>Bacteria</taxon>
        <taxon>Pseudomonadati</taxon>
        <taxon>Acidobacteriota</taxon>
        <taxon>Terriglobia</taxon>
        <taxon>Bryobacterales</taxon>
        <taxon>Solibacteraceae</taxon>
        <taxon>Candidatus Solibacter</taxon>
    </lineage>
</organism>
<name>GCS2_SOLUE</name>
<evidence type="ECO:0000255" key="1">
    <source>
        <dbReference type="HAMAP-Rule" id="MF_01609"/>
    </source>
</evidence>
<accession>Q01ZM2</accession>
<reference key="1">
    <citation type="journal article" date="2009" name="Appl. Environ. Microbiol.">
        <title>Three genomes from the phylum Acidobacteria provide insight into the lifestyles of these microorganisms in soils.</title>
        <authorList>
            <person name="Ward N.L."/>
            <person name="Challacombe J.F."/>
            <person name="Janssen P.H."/>
            <person name="Henrissat B."/>
            <person name="Coutinho P.M."/>
            <person name="Wu M."/>
            <person name="Xie G."/>
            <person name="Haft D.H."/>
            <person name="Sait M."/>
            <person name="Badger J."/>
            <person name="Barabote R.D."/>
            <person name="Bradley B."/>
            <person name="Brettin T.S."/>
            <person name="Brinkac L.M."/>
            <person name="Bruce D."/>
            <person name="Creasy T."/>
            <person name="Daugherty S.C."/>
            <person name="Davidsen T.M."/>
            <person name="DeBoy R.T."/>
            <person name="Detter J.C."/>
            <person name="Dodson R.J."/>
            <person name="Durkin A.S."/>
            <person name="Ganapathy A."/>
            <person name="Gwinn-Giglio M."/>
            <person name="Han C.S."/>
            <person name="Khouri H."/>
            <person name="Kiss H."/>
            <person name="Kothari S.P."/>
            <person name="Madupu R."/>
            <person name="Nelson K.E."/>
            <person name="Nelson W.C."/>
            <person name="Paulsen I."/>
            <person name="Penn K."/>
            <person name="Ren Q."/>
            <person name="Rosovitz M.J."/>
            <person name="Selengut J.D."/>
            <person name="Shrivastava S."/>
            <person name="Sullivan S.A."/>
            <person name="Tapia R."/>
            <person name="Thompson L.S."/>
            <person name="Watkins K.L."/>
            <person name="Yang Q."/>
            <person name="Yu C."/>
            <person name="Zafar N."/>
            <person name="Zhou L."/>
            <person name="Kuske C.R."/>
        </authorList>
    </citation>
    <scope>NUCLEOTIDE SEQUENCE [LARGE SCALE GENOMIC DNA]</scope>
    <source>
        <strain>Ellin6076</strain>
    </source>
</reference>
<protein>
    <recommendedName>
        <fullName evidence="1">Putative glutamate--cysteine ligase 2</fullName>
        <ecNumber evidence="1">6.3.2.2</ecNumber>
    </recommendedName>
    <alternativeName>
        <fullName evidence="1">Gamma-glutamylcysteine synthetase 2</fullName>
        <shortName evidence="1">GCS 2</shortName>
        <shortName evidence="1">Gamma-GCS 2</shortName>
    </alternativeName>
</protein>
<dbReference type="EC" id="6.3.2.2" evidence="1"/>
<dbReference type="EMBL" id="CP000473">
    <property type="protein sequence ID" value="ABJ84893.1"/>
    <property type="molecule type" value="Genomic_DNA"/>
</dbReference>
<dbReference type="SMR" id="Q01ZM2"/>
<dbReference type="FunCoup" id="Q01ZM2">
    <property type="interactions" value="76"/>
</dbReference>
<dbReference type="STRING" id="234267.Acid_3926"/>
<dbReference type="KEGG" id="sus:Acid_3926"/>
<dbReference type="eggNOG" id="COG2170">
    <property type="taxonomic scope" value="Bacteria"/>
</dbReference>
<dbReference type="HOGENOM" id="CLU_044848_1_0_0"/>
<dbReference type="InParanoid" id="Q01ZM2"/>
<dbReference type="OrthoDB" id="9769628at2"/>
<dbReference type="GO" id="GO:0005524">
    <property type="term" value="F:ATP binding"/>
    <property type="evidence" value="ECO:0007669"/>
    <property type="project" value="UniProtKB-KW"/>
</dbReference>
<dbReference type="GO" id="GO:0004357">
    <property type="term" value="F:glutamate-cysteine ligase activity"/>
    <property type="evidence" value="ECO:0007669"/>
    <property type="project" value="UniProtKB-EC"/>
</dbReference>
<dbReference type="GO" id="GO:0042398">
    <property type="term" value="P:modified amino acid biosynthetic process"/>
    <property type="evidence" value="ECO:0007669"/>
    <property type="project" value="InterPro"/>
</dbReference>
<dbReference type="Gene3D" id="3.30.590.20">
    <property type="match status" value="1"/>
</dbReference>
<dbReference type="HAMAP" id="MF_01609">
    <property type="entry name" value="Glu_cys_ligase_2"/>
    <property type="match status" value="1"/>
</dbReference>
<dbReference type="InterPro" id="IPR050141">
    <property type="entry name" value="GCL_type2/YbdK_subfam"/>
</dbReference>
<dbReference type="InterPro" id="IPR006336">
    <property type="entry name" value="GCS2"/>
</dbReference>
<dbReference type="InterPro" id="IPR014746">
    <property type="entry name" value="Gln_synth/guanido_kin_cat_dom"/>
</dbReference>
<dbReference type="InterPro" id="IPR011793">
    <property type="entry name" value="YbdK"/>
</dbReference>
<dbReference type="NCBIfam" id="TIGR02050">
    <property type="entry name" value="gshA_cyan_rel"/>
    <property type="match status" value="1"/>
</dbReference>
<dbReference type="NCBIfam" id="NF010039">
    <property type="entry name" value="PRK13515.1"/>
    <property type="match status" value="1"/>
</dbReference>
<dbReference type="PANTHER" id="PTHR36510">
    <property type="entry name" value="GLUTAMATE--CYSTEINE LIGASE 2-RELATED"/>
    <property type="match status" value="1"/>
</dbReference>
<dbReference type="PANTHER" id="PTHR36510:SF1">
    <property type="entry name" value="GLUTAMATE--CYSTEINE LIGASE 2-RELATED"/>
    <property type="match status" value="1"/>
</dbReference>
<dbReference type="Pfam" id="PF04107">
    <property type="entry name" value="GCS2"/>
    <property type="match status" value="1"/>
</dbReference>
<dbReference type="SUPFAM" id="SSF55931">
    <property type="entry name" value="Glutamine synthetase/guanido kinase"/>
    <property type="match status" value="1"/>
</dbReference>